<comment type="function">
    <text evidence="1">Transports acetate.</text>
</comment>
<comment type="subcellular location">
    <subcellularLocation>
        <location evidence="1">Cell inner membrane</location>
        <topology evidence="1">Multi-pass membrane protein</topology>
    </subcellularLocation>
</comment>
<comment type="similarity">
    <text evidence="3">Belongs to the sodium:solute symporter (SSF) (TC 2.A.21) family.</text>
</comment>
<reference key="1">
    <citation type="journal article" date="2002" name="Proc. Natl. Acad. Sci. U.S.A.">
        <title>Extensive mosaic structure revealed by the complete genome sequence of uropathogenic Escherichia coli.</title>
        <authorList>
            <person name="Welch R.A."/>
            <person name="Burland V."/>
            <person name="Plunkett G. III"/>
            <person name="Redford P."/>
            <person name="Roesch P."/>
            <person name="Rasko D."/>
            <person name="Buckles E.L."/>
            <person name="Liou S.-R."/>
            <person name="Boutin A."/>
            <person name="Hackett J."/>
            <person name="Stroud D."/>
            <person name="Mayhew G.F."/>
            <person name="Rose D.J."/>
            <person name="Zhou S."/>
            <person name="Schwartz D.C."/>
            <person name="Perna N.T."/>
            <person name="Mobley H.L.T."/>
            <person name="Donnenberg M.S."/>
            <person name="Blattner F.R."/>
        </authorList>
    </citation>
    <scope>NUCLEOTIDE SEQUENCE [LARGE SCALE GENOMIC DNA]</scope>
    <source>
        <strain>CFT073 / ATCC 700928 / UPEC</strain>
    </source>
</reference>
<protein>
    <recommendedName>
        <fullName>Cation/acetate symporter ActP</fullName>
    </recommendedName>
    <alternativeName>
        <fullName>Acetate permease</fullName>
    </alternativeName>
    <alternativeName>
        <fullName>Acetate transporter ActP</fullName>
    </alternativeName>
</protein>
<proteinExistence type="inferred from homology"/>
<gene>
    <name type="primary">actP</name>
    <name type="ordered locus">c5062</name>
</gene>
<organism>
    <name type="scientific">Escherichia coli O6:H1 (strain CFT073 / ATCC 700928 / UPEC)</name>
    <dbReference type="NCBI Taxonomy" id="199310"/>
    <lineage>
        <taxon>Bacteria</taxon>
        <taxon>Pseudomonadati</taxon>
        <taxon>Pseudomonadota</taxon>
        <taxon>Gammaproteobacteria</taxon>
        <taxon>Enterobacterales</taxon>
        <taxon>Enterobacteriaceae</taxon>
        <taxon>Escherichia</taxon>
    </lineage>
</organism>
<accession>Q8FAZ0</accession>
<evidence type="ECO:0000250" key="1"/>
<evidence type="ECO:0000255" key="2"/>
<evidence type="ECO:0000305" key="3"/>
<dbReference type="EMBL" id="AE014075">
    <property type="protein sequence ID" value="AAN83488.1"/>
    <property type="molecule type" value="Genomic_DNA"/>
</dbReference>
<dbReference type="RefSeq" id="WP_000832545.1">
    <property type="nucleotide sequence ID" value="NC_004431.1"/>
</dbReference>
<dbReference type="SMR" id="Q8FAZ0"/>
<dbReference type="STRING" id="199310.c5062"/>
<dbReference type="KEGG" id="ecc:c5062"/>
<dbReference type="eggNOG" id="COG4147">
    <property type="taxonomic scope" value="Bacteria"/>
</dbReference>
<dbReference type="HOGENOM" id="CLU_018808_8_3_6"/>
<dbReference type="BioCyc" id="ECOL199310:C5062-MONOMER"/>
<dbReference type="Proteomes" id="UP000001410">
    <property type="component" value="Chromosome"/>
</dbReference>
<dbReference type="GO" id="GO:0005886">
    <property type="term" value="C:plasma membrane"/>
    <property type="evidence" value="ECO:0007669"/>
    <property type="project" value="UniProtKB-SubCell"/>
</dbReference>
<dbReference type="GO" id="GO:0015123">
    <property type="term" value="F:acetate transmembrane transporter activity"/>
    <property type="evidence" value="ECO:0007669"/>
    <property type="project" value="UniProtKB-UniRule"/>
</dbReference>
<dbReference type="GO" id="GO:0043879">
    <property type="term" value="F:glycolate transmembrane transporter activity"/>
    <property type="evidence" value="ECO:0007669"/>
    <property type="project" value="InterPro"/>
</dbReference>
<dbReference type="GO" id="GO:0015293">
    <property type="term" value="F:symporter activity"/>
    <property type="evidence" value="ECO:0007669"/>
    <property type="project" value="UniProtKB-KW"/>
</dbReference>
<dbReference type="GO" id="GO:0006847">
    <property type="term" value="P:plasma membrane acetate transport"/>
    <property type="evidence" value="ECO:0007669"/>
    <property type="project" value="TreeGrafter"/>
</dbReference>
<dbReference type="GO" id="GO:0006814">
    <property type="term" value="P:sodium ion transport"/>
    <property type="evidence" value="ECO:0007669"/>
    <property type="project" value="UniProtKB-KW"/>
</dbReference>
<dbReference type="CDD" id="cd11480">
    <property type="entry name" value="SLC5sbd_u4"/>
    <property type="match status" value="1"/>
</dbReference>
<dbReference type="FunFam" id="1.20.1730.10:FF:000001">
    <property type="entry name" value="Cation/acetate symporter ActP"/>
    <property type="match status" value="1"/>
</dbReference>
<dbReference type="Gene3D" id="1.20.1730.10">
    <property type="entry name" value="Sodium/glucose cotransporter"/>
    <property type="match status" value="1"/>
</dbReference>
<dbReference type="HAMAP" id="MF_01426">
    <property type="entry name" value="Acet_symport_ActP"/>
    <property type="match status" value="1"/>
</dbReference>
<dbReference type="InterPro" id="IPR014083">
    <property type="entry name" value="Cation/Ac_symporter_ActP"/>
</dbReference>
<dbReference type="InterPro" id="IPR038377">
    <property type="entry name" value="Na/Glc_symporter_sf"/>
</dbReference>
<dbReference type="InterPro" id="IPR001734">
    <property type="entry name" value="Na/solute_symporter"/>
</dbReference>
<dbReference type="InterPro" id="IPR018212">
    <property type="entry name" value="Na/solute_symporter_CS"/>
</dbReference>
<dbReference type="InterPro" id="IPR050277">
    <property type="entry name" value="Sodium:Solute_Symporter"/>
</dbReference>
<dbReference type="NCBIfam" id="NF006903">
    <property type="entry name" value="PRK09395.1"/>
    <property type="match status" value="1"/>
</dbReference>
<dbReference type="NCBIfam" id="NF009135">
    <property type="entry name" value="PRK12488.1"/>
    <property type="match status" value="1"/>
</dbReference>
<dbReference type="NCBIfam" id="TIGR00813">
    <property type="entry name" value="sss"/>
    <property type="match status" value="1"/>
</dbReference>
<dbReference type="NCBIfam" id="TIGR02711">
    <property type="entry name" value="symport_actP"/>
    <property type="match status" value="1"/>
</dbReference>
<dbReference type="PANTHER" id="PTHR48086:SF6">
    <property type="entry name" value="CATION_ACETATE SYMPORTER ACTP"/>
    <property type="match status" value="1"/>
</dbReference>
<dbReference type="PANTHER" id="PTHR48086">
    <property type="entry name" value="SODIUM/PROLINE SYMPORTER-RELATED"/>
    <property type="match status" value="1"/>
</dbReference>
<dbReference type="Pfam" id="PF00474">
    <property type="entry name" value="SSF"/>
    <property type="match status" value="1"/>
</dbReference>
<dbReference type="PROSITE" id="PS00456">
    <property type="entry name" value="NA_SOLUT_SYMP_1"/>
    <property type="match status" value="1"/>
</dbReference>
<dbReference type="PROSITE" id="PS00457">
    <property type="entry name" value="NA_SOLUT_SYMP_2"/>
    <property type="match status" value="1"/>
</dbReference>
<dbReference type="PROSITE" id="PS50283">
    <property type="entry name" value="NA_SOLUT_SYMP_3"/>
    <property type="match status" value="1"/>
</dbReference>
<sequence>MKRVLTALAATLPFAANAADAISGAVERQPTNWQAIIMFLIFVVFTLGITYWASKRVRSRNDYYTAGGNITGFQNGLAIAGDYMSAASFLGISALVFTSGYDGLIYSLGFLVGWPIILFLIAERLRNLGRYTFADVASYRLKQGPIRILSACGSLVVVALYLIAQMVGAGKLIELLFGLNYHIAVVLVGVLMMMYVLFGGMLATTWVQIIKAVLLLFGASFMAFMVMKHVGFSFNNLFSEAMAVHPKGVDIMKPGGLVKDPISALSLGLGLMFGTAGLPHILMHFFTVSDAREARKSVFYATGFMGYFYILTFIIGFGAIMLVGANPEYKDAAGHLIGGNNMAAVHLANAVGGNLFLGFISAVAFATILAVVAGLTLAGASAVSHDLYANVFKKGATEREELRVSKITVLILGVIAIILGVLFENQNIAFMVGLAFAIAASCNFPIILLSMYWSKLTTRGAMLGGWLGLITAVVLMILGPTIWVQILGHEKAIFPYEYPALFSISVAFLGIWLFSATDNSAEGARERELFRAQFIRSQTGFGVEQGRAH</sequence>
<name>ACTP_ECOL6</name>
<feature type="chain" id="PRO_0000105409" description="Cation/acetate symporter ActP">
    <location>
        <begin position="1"/>
        <end position="549"/>
    </location>
</feature>
<feature type="topological domain" description="Periplasmic" evidence="2">
    <location>
        <begin position="1"/>
        <end position="32"/>
    </location>
</feature>
<feature type="transmembrane region" description="Helical" evidence="2">
    <location>
        <begin position="33"/>
        <end position="55"/>
    </location>
</feature>
<feature type="topological domain" description="Cytoplasmic" evidence="2">
    <location>
        <begin position="56"/>
        <end position="75"/>
    </location>
</feature>
<feature type="transmembrane region" description="Helical" evidence="2">
    <location>
        <begin position="76"/>
        <end position="98"/>
    </location>
</feature>
<feature type="topological domain" description="Periplasmic" evidence="2">
    <location>
        <begin position="99"/>
        <end position="102"/>
    </location>
</feature>
<feature type="transmembrane region" description="Helical" evidence="2">
    <location>
        <begin position="103"/>
        <end position="125"/>
    </location>
</feature>
<feature type="topological domain" description="Cytoplasmic" evidence="2">
    <location>
        <begin position="126"/>
        <end position="145"/>
    </location>
</feature>
<feature type="transmembrane region" description="Helical" evidence="2">
    <location>
        <begin position="146"/>
        <end position="168"/>
    </location>
</feature>
<feature type="topological domain" description="Periplasmic" evidence="2">
    <location>
        <begin position="169"/>
        <end position="182"/>
    </location>
</feature>
<feature type="transmembrane region" description="Helical" evidence="2">
    <location>
        <begin position="183"/>
        <end position="205"/>
    </location>
</feature>
<feature type="topological domain" description="Cytoplasmic" evidence="2">
    <location>
        <begin position="206"/>
        <end position="211"/>
    </location>
</feature>
<feature type="transmembrane region" description="Helical" evidence="2">
    <location>
        <begin position="212"/>
        <end position="234"/>
    </location>
</feature>
<feature type="topological domain" description="Periplasmic" evidence="2">
    <location>
        <begin position="235"/>
        <end position="263"/>
    </location>
</feature>
<feature type="transmembrane region" description="Helical" evidence="2">
    <location>
        <begin position="264"/>
        <end position="286"/>
    </location>
</feature>
<feature type="topological domain" description="Cytoplasmic" evidence="2">
    <location>
        <begin position="287"/>
        <end position="297"/>
    </location>
</feature>
<feature type="transmembrane region" description="Helical" evidence="2">
    <location>
        <begin position="298"/>
        <end position="320"/>
    </location>
</feature>
<feature type="topological domain" description="Periplasmic" evidence="2">
    <location>
        <begin position="321"/>
        <end position="358"/>
    </location>
</feature>
<feature type="transmembrane region" description="Helical" evidence="2">
    <location>
        <begin position="359"/>
        <end position="381"/>
    </location>
</feature>
<feature type="topological domain" description="Cytoplasmic" evidence="2">
    <location>
        <begin position="382"/>
        <end position="401"/>
    </location>
</feature>
<feature type="transmembrane region" description="Helical" evidence="2">
    <location>
        <begin position="402"/>
        <end position="424"/>
    </location>
</feature>
<feature type="topological domain" description="Periplasmic" evidence="2">
    <location>
        <begin position="425"/>
        <end position="427"/>
    </location>
</feature>
<feature type="transmembrane region" description="Helical" evidence="2">
    <location>
        <begin position="428"/>
        <end position="450"/>
    </location>
</feature>
<feature type="topological domain" description="Cytoplasmic" evidence="2">
    <location>
        <begin position="451"/>
        <end position="461"/>
    </location>
</feature>
<feature type="transmembrane region" description="Helical" evidence="2">
    <location>
        <begin position="462"/>
        <end position="484"/>
    </location>
</feature>
<feature type="topological domain" description="Periplasmic" evidence="2">
    <location>
        <begin position="485"/>
        <end position="493"/>
    </location>
</feature>
<feature type="transmembrane region" description="Helical" evidence="2">
    <location>
        <begin position="494"/>
        <end position="516"/>
    </location>
</feature>
<feature type="topological domain" description="Cytoplasmic" evidence="2">
    <location>
        <begin position="517"/>
        <end position="549"/>
    </location>
</feature>
<keyword id="KW-0997">Cell inner membrane</keyword>
<keyword id="KW-1003">Cell membrane</keyword>
<keyword id="KW-0406">Ion transport</keyword>
<keyword id="KW-0472">Membrane</keyword>
<keyword id="KW-1185">Reference proteome</keyword>
<keyword id="KW-0915">Sodium</keyword>
<keyword id="KW-0739">Sodium transport</keyword>
<keyword id="KW-0769">Symport</keyword>
<keyword id="KW-0812">Transmembrane</keyword>
<keyword id="KW-1133">Transmembrane helix</keyword>
<keyword id="KW-0813">Transport</keyword>